<keyword id="KW-0217">Developmental protein</keyword>
<keyword id="KW-0238">DNA-binding</keyword>
<keyword id="KW-0371">Homeobox</keyword>
<keyword id="KW-0539">Nucleus</keyword>
<keyword id="KW-1185">Reference proteome</keyword>
<sequence length="257" mass="28110">MPASMFSIDNILAARPRCKDSVLPVAPSAAAPVVFPALHGDSLYGASGGASSDYGAFYPRPVAPGGAGLPAAVSGSRLGYNNYFYGQLHVQAAPVGPACCGAVPPLGAQQCSCVPTPPGYEGPGSVLVSPVPHQMLPYMNVGTLSRTELQLLNQLHCRRKRRHRTIFTDEQLEALENLFQETKYPDVGTREQLARKVHLREEKVEVWFKNRRAKWRRQKRSSSEESENAEKWNKTSSSKASPEKREEEGKSDLDSDS</sequence>
<gene>
    <name type="primary">GSC</name>
</gene>
<reference key="1">
    <citation type="submission" date="2006-08" db="EMBL/GenBank/DDBJ databases">
        <title>Positive selection in transcription factor genes on the human lineage.</title>
        <authorList>
            <person name="Nickel G.C."/>
            <person name="Tefft D.L."/>
            <person name="Trevarthen K."/>
            <person name="Funt J."/>
            <person name="Adams M.D."/>
        </authorList>
    </citation>
    <scope>NUCLEOTIDE SEQUENCE [GENOMIC DNA]</scope>
</reference>
<proteinExistence type="inferred from homology"/>
<accession>A2T733</accession>
<feature type="chain" id="PRO_0000285444" description="Homeobox protein goosecoid">
    <location>
        <begin position="1"/>
        <end position="257"/>
    </location>
</feature>
<feature type="DNA-binding region" description="Homeobox" evidence="2">
    <location>
        <begin position="160"/>
        <end position="219"/>
    </location>
</feature>
<feature type="region of interest" description="Disordered" evidence="3">
    <location>
        <begin position="213"/>
        <end position="257"/>
    </location>
</feature>
<feature type="compositionally biased region" description="Basic and acidic residues" evidence="3">
    <location>
        <begin position="241"/>
        <end position="257"/>
    </location>
</feature>
<dbReference type="EMBL" id="DQ977363">
    <property type="protein sequence ID" value="ABM91988.1"/>
    <property type="molecule type" value="Genomic_DNA"/>
</dbReference>
<dbReference type="RefSeq" id="NP_001074955.1">
    <property type="nucleotide sequence ID" value="NM_001081486.1"/>
</dbReference>
<dbReference type="BMRB" id="A2T733"/>
<dbReference type="SMR" id="A2T733"/>
<dbReference type="FunCoup" id="A2T733">
    <property type="interactions" value="827"/>
</dbReference>
<dbReference type="STRING" id="9598.ENSPTRP00000011401"/>
<dbReference type="PaxDb" id="9598-ENSPTRP00000011401"/>
<dbReference type="Ensembl" id="ENSPTRT00000012313.2">
    <property type="protein sequence ID" value="ENSPTRP00000011401.1"/>
    <property type="gene ID" value="ENSPTRG00000006687.2"/>
</dbReference>
<dbReference type="GeneID" id="467546"/>
<dbReference type="KEGG" id="ptr:467546"/>
<dbReference type="CTD" id="145258"/>
<dbReference type="VGNC" id="VGNC:3412">
    <property type="gene designation" value="GSC"/>
</dbReference>
<dbReference type="eggNOG" id="KOG0490">
    <property type="taxonomic scope" value="Eukaryota"/>
</dbReference>
<dbReference type="GeneTree" id="ENSGT00940000160635"/>
<dbReference type="HOGENOM" id="CLU_096519_0_0_1"/>
<dbReference type="InParanoid" id="A2T733"/>
<dbReference type="OMA" id="QCSCVPA"/>
<dbReference type="OrthoDB" id="15169at9604"/>
<dbReference type="TreeFam" id="TF351613"/>
<dbReference type="Proteomes" id="UP000002277">
    <property type="component" value="Chromosome 14"/>
</dbReference>
<dbReference type="Bgee" id="ENSPTRG00000006687">
    <property type="expression patterns" value="Expressed in hindlimb stylopod muscle and 1 other cell type or tissue"/>
</dbReference>
<dbReference type="GO" id="GO:0005634">
    <property type="term" value="C:nucleus"/>
    <property type="evidence" value="ECO:0000318"/>
    <property type="project" value="GO_Central"/>
</dbReference>
<dbReference type="GO" id="GO:0005667">
    <property type="term" value="C:transcription regulator complex"/>
    <property type="evidence" value="ECO:0007669"/>
    <property type="project" value="Ensembl"/>
</dbReference>
<dbReference type="GO" id="GO:0000981">
    <property type="term" value="F:DNA-binding transcription factor activity, RNA polymerase II-specific"/>
    <property type="evidence" value="ECO:0000318"/>
    <property type="project" value="GO_Central"/>
</dbReference>
<dbReference type="GO" id="GO:0001227">
    <property type="term" value="F:DNA-binding transcription repressor activity, RNA polymerase II-specific"/>
    <property type="evidence" value="ECO:0007669"/>
    <property type="project" value="Ensembl"/>
</dbReference>
<dbReference type="GO" id="GO:0000978">
    <property type="term" value="F:RNA polymerase II cis-regulatory region sequence-specific DNA binding"/>
    <property type="evidence" value="ECO:0000318"/>
    <property type="project" value="GO_Central"/>
</dbReference>
<dbReference type="GO" id="GO:0061629">
    <property type="term" value="F:RNA polymerase II-specific DNA-binding transcription factor binding"/>
    <property type="evidence" value="ECO:0007669"/>
    <property type="project" value="Ensembl"/>
</dbReference>
<dbReference type="GO" id="GO:0021904">
    <property type="term" value="P:dorsal/ventral neural tube patterning"/>
    <property type="evidence" value="ECO:0007669"/>
    <property type="project" value="Ensembl"/>
</dbReference>
<dbReference type="GO" id="GO:0048704">
    <property type="term" value="P:embryonic skeletal system morphogenesis"/>
    <property type="evidence" value="ECO:0007669"/>
    <property type="project" value="Ensembl"/>
</dbReference>
<dbReference type="GO" id="GO:0030900">
    <property type="term" value="P:forebrain development"/>
    <property type="evidence" value="ECO:0007669"/>
    <property type="project" value="Ensembl"/>
</dbReference>
<dbReference type="GO" id="GO:0042474">
    <property type="term" value="P:middle ear morphogenesis"/>
    <property type="evidence" value="ECO:0000250"/>
    <property type="project" value="UniProtKB"/>
</dbReference>
<dbReference type="GO" id="GO:0048644">
    <property type="term" value="P:muscle organ morphogenesis"/>
    <property type="evidence" value="ECO:0007669"/>
    <property type="project" value="Ensembl"/>
</dbReference>
<dbReference type="GO" id="GO:0030178">
    <property type="term" value="P:negative regulation of Wnt signaling pathway"/>
    <property type="evidence" value="ECO:0007669"/>
    <property type="project" value="Ensembl"/>
</dbReference>
<dbReference type="GO" id="GO:0014036">
    <property type="term" value="P:neural crest cell fate specification"/>
    <property type="evidence" value="ECO:0000250"/>
    <property type="project" value="UniProtKB"/>
</dbReference>
<dbReference type="GO" id="GO:0006357">
    <property type="term" value="P:regulation of transcription by RNA polymerase II"/>
    <property type="evidence" value="ECO:0000318"/>
    <property type="project" value="GO_Central"/>
</dbReference>
<dbReference type="GO" id="GO:0023019">
    <property type="term" value="P:signal transduction involved in regulation of gene expression"/>
    <property type="evidence" value="ECO:0007669"/>
    <property type="project" value="Ensembl"/>
</dbReference>
<dbReference type="GO" id="GO:0016055">
    <property type="term" value="P:Wnt signaling pathway"/>
    <property type="evidence" value="ECO:0007669"/>
    <property type="project" value="Ensembl"/>
</dbReference>
<dbReference type="CDD" id="cd00086">
    <property type="entry name" value="homeodomain"/>
    <property type="match status" value="1"/>
</dbReference>
<dbReference type="FunFam" id="1.10.10.60:FF:000210">
    <property type="entry name" value="homeobox protein goosecoid"/>
    <property type="match status" value="1"/>
</dbReference>
<dbReference type="Gene3D" id="1.10.10.60">
    <property type="entry name" value="Homeodomain-like"/>
    <property type="match status" value="1"/>
</dbReference>
<dbReference type="InterPro" id="IPR051440">
    <property type="entry name" value="Goosecoid-like_HB"/>
</dbReference>
<dbReference type="InterPro" id="IPR001356">
    <property type="entry name" value="HD"/>
</dbReference>
<dbReference type="InterPro" id="IPR017970">
    <property type="entry name" value="Homeobox_CS"/>
</dbReference>
<dbReference type="InterPro" id="IPR009057">
    <property type="entry name" value="Homeodomain-like_sf"/>
</dbReference>
<dbReference type="PANTHER" id="PTHR46643:SF2">
    <property type="entry name" value="HOMEOBOX PROTEIN GOOSECOID"/>
    <property type="match status" value="1"/>
</dbReference>
<dbReference type="PANTHER" id="PTHR46643">
    <property type="entry name" value="HOMEOBOX PROTEIN GOOSECOID-RELATED"/>
    <property type="match status" value="1"/>
</dbReference>
<dbReference type="Pfam" id="PF00046">
    <property type="entry name" value="Homeodomain"/>
    <property type="match status" value="1"/>
</dbReference>
<dbReference type="SMART" id="SM00389">
    <property type="entry name" value="HOX"/>
    <property type="match status" value="1"/>
</dbReference>
<dbReference type="SUPFAM" id="SSF46689">
    <property type="entry name" value="Homeodomain-like"/>
    <property type="match status" value="1"/>
</dbReference>
<dbReference type="PROSITE" id="PS00027">
    <property type="entry name" value="HOMEOBOX_1"/>
    <property type="match status" value="1"/>
</dbReference>
<dbReference type="PROSITE" id="PS50071">
    <property type="entry name" value="HOMEOBOX_2"/>
    <property type="match status" value="1"/>
</dbReference>
<comment type="function">
    <text evidence="1">Regulates chordin (CHRD). May play a role in spatial programing within discrete embryonic fields or lineage compartments during organogenesis. In concert with NKX3-2, plays a role in defining the structural components of the middle ear; required for the development of the entire tympanic ring (By similarity). Probably involved in the regulatory networks that define neural crest cell fate specification and determine mesoderm cell lineages in mammals (By similarity).</text>
</comment>
<comment type="subcellular location">
    <subcellularLocation>
        <location evidence="2">Nucleus</location>
    </subcellularLocation>
</comment>
<comment type="similarity">
    <text evidence="4">Belongs to the paired homeobox family. Bicoid subfamily.</text>
</comment>
<evidence type="ECO:0000250" key="1"/>
<evidence type="ECO:0000255" key="2">
    <source>
        <dbReference type="PROSITE-ProRule" id="PRU00108"/>
    </source>
</evidence>
<evidence type="ECO:0000256" key="3">
    <source>
        <dbReference type="SAM" id="MobiDB-lite"/>
    </source>
</evidence>
<evidence type="ECO:0000305" key="4"/>
<name>GSC_PANTR</name>
<organism>
    <name type="scientific">Pan troglodytes</name>
    <name type="common">Chimpanzee</name>
    <dbReference type="NCBI Taxonomy" id="9598"/>
    <lineage>
        <taxon>Eukaryota</taxon>
        <taxon>Metazoa</taxon>
        <taxon>Chordata</taxon>
        <taxon>Craniata</taxon>
        <taxon>Vertebrata</taxon>
        <taxon>Euteleostomi</taxon>
        <taxon>Mammalia</taxon>
        <taxon>Eutheria</taxon>
        <taxon>Euarchontoglires</taxon>
        <taxon>Primates</taxon>
        <taxon>Haplorrhini</taxon>
        <taxon>Catarrhini</taxon>
        <taxon>Hominidae</taxon>
        <taxon>Pan</taxon>
    </lineage>
</organism>
<protein>
    <recommendedName>
        <fullName>Homeobox protein goosecoid</fullName>
    </recommendedName>
</protein>